<sequence>MSNINVIDILKESDALLEGHFLLSSGRHSNRYCQCAKLLQCPQKAEKVISVIAEKLKEVDFNIIVGPAMGGVIVSYELARQTNKPGIFAERKEGVMCIRRGFEIKKGDKVIISEDVVTTGKSSLEVAKVIEEMGGEVVGIACIVDRRAEDIKTNYPIYSACKLEIETYEKDNCELCKKNIPFVKPGSREQK</sequence>
<dbReference type="EC" id="2.4.2.10" evidence="1"/>
<dbReference type="EMBL" id="CP000726">
    <property type="protein sequence ID" value="ABS34013.1"/>
    <property type="molecule type" value="Genomic_DNA"/>
</dbReference>
<dbReference type="RefSeq" id="WP_003361660.1">
    <property type="nucleotide sequence ID" value="NC_009697.1"/>
</dbReference>
<dbReference type="SMR" id="A7FYI6"/>
<dbReference type="GeneID" id="5186878"/>
<dbReference type="KEGG" id="cba:CLB_3272"/>
<dbReference type="HOGENOM" id="CLU_074878_3_0_9"/>
<dbReference type="UniPathway" id="UPA00070">
    <property type="reaction ID" value="UER00119"/>
</dbReference>
<dbReference type="GO" id="GO:0000287">
    <property type="term" value="F:magnesium ion binding"/>
    <property type="evidence" value="ECO:0007669"/>
    <property type="project" value="UniProtKB-UniRule"/>
</dbReference>
<dbReference type="GO" id="GO:0004588">
    <property type="term" value="F:orotate phosphoribosyltransferase activity"/>
    <property type="evidence" value="ECO:0007669"/>
    <property type="project" value="UniProtKB-UniRule"/>
</dbReference>
<dbReference type="GO" id="GO:0044205">
    <property type="term" value="P:'de novo' UMP biosynthetic process"/>
    <property type="evidence" value="ECO:0007669"/>
    <property type="project" value="UniProtKB-UniRule"/>
</dbReference>
<dbReference type="GO" id="GO:0019856">
    <property type="term" value="P:pyrimidine nucleobase biosynthetic process"/>
    <property type="evidence" value="ECO:0007669"/>
    <property type="project" value="InterPro"/>
</dbReference>
<dbReference type="CDD" id="cd06223">
    <property type="entry name" value="PRTases_typeI"/>
    <property type="match status" value="1"/>
</dbReference>
<dbReference type="Gene3D" id="3.40.50.2020">
    <property type="match status" value="1"/>
</dbReference>
<dbReference type="HAMAP" id="MF_01208">
    <property type="entry name" value="PyrE"/>
    <property type="match status" value="1"/>
</dbReference>
<dbReference type="InterPro" id="IPR023031">
    <property type="entry name" value="OPRT"/>
</dbReference>
<dbReference type="InterPro" id="IPR006273">
    <property type="entry name" value="Orotate_PRibTrfase_bac"/>
</dbReference>
<dbReference type="InterPro" id="IPR000836">
    <property type="entry name" value="PRibTrfase_dom"/>
</dbReference>
<dbReference type="InterPro" id="IPR029057">
    <property type="entry name" value="PRTase-like"/>
</dbReference>
<dbReference type="NCBIfam" id="TIGR01367">
    <property type="entry name" value="pyrE_Therm"/>
    <property type="match status" value="1"/>
</dbReference>
<dbReference type="PANTHER" id="PTHR19278">
    <property type="entry name" value="OROTATE PHOSPHORIBOSYLTRANSFERASE"/>
    <property type="match status" value="1"/>
</dbReference>
<dbReference type="PANTHER" id="PTHR19278:SF9">
    <property type="entry name" value="URIDINE 5'-MONOPHOSPHATE SYNTHASE"/>
    <property type="match status" value="1"/>
</dbReference>
<dbReference type="Pfam" id="PF00156">
    <property type="entry name" value="Pribosyltran"/>
    <property type="match status" value="1"/>
</dbReference>
<dbReference type="SUPFAM" id="SSF53271">
    <property type="entry name" value="PRTase-like"/>
    <property type="match status" value="1"/>
</dbReference>
<proteinExistence type="inferred from homology"/>
<organism>
    <name type="scientific">Clostridium botulinum (strain ATCC 19397 / Type A)</name>
    <dbReference type="NCBI Taxonomy" id="441770"/>
    <lineage>
        <taxon>Bacteria</taxon>
        <taxon>Bacillati</taxon>
        <taxon>Bacillota</taxon>
        <taxon>Clostridia</taxon>
        <taxon>Eubacteriales</taxon>
        <taxon>Clostridiaceae</taxon>
        <taxon>Clostridium</taxon>
    </lineage>
</organism>
<comment type="function">
    <text evidence="1">Catalyzes the transfer of a ribosyl phosphate group from 5-phosphoribose 1-diphosphate to orotate, leading to the formation of orotidine monophosphate (OMP).</text>
</comment>
<comment type="catalytic activity">
    <reaction evidence="1">
        <text>orotidine 5'-phosphate + diphosphate = orotate + 5-phospho-alpha-D-ribose 1-diphosphate</text>
        <dbReference type="Rhea" id="RHEA:10380"/>
        <dbReference type="ChEBI" id="CHEBI:30839"/>
        <dbReference type="ChEBI" id="CHEBI:33019"/>
        <dbReference type="ChEBI" id="CHEBI:57538"/>
        <dbReference type="ChEBI" id="CHEBI:58017"/>
        <dbReference type="EC" id="2.4.2.10"/>
    </reaction>
</comment>
<comment type="cofactor">
    <cofactor evidence="1">
        <name>Mg(2+)</name>
        <dbReference type="ChEBI" id="CHEBI:18420"/>
    </cofactor>
</comment>
<comment type="pathway">
    <text evidence="1">Pyrimidine metabolism; UMP biosynthesis via de novo pathway; UMP from orotate: step 1/2.</text>
</comment>
<comment type="subunit">
    <text evidence="1">Homodimer.</text>
</comment>
<comment type="similarity">
    <text evidence="1">Belongs to the purine/pyrimidine phosphoribosyltransferase family. PyrE subfamily.</text>
</comment>
<protein>
    <recommendedName>
        <fullName evidence="1">Orotate phosphoribosyltransferase</fullName>
        <shortName evidence="1">OPRT</shortName>
        <shortName evidence="1">OPRTase</shortName>
        <ecNumber evidence="1">2.4.2.10</ecNumber>
    </recommendedName>
</protein>
<evidence type="ECO:0000255" key="1">
    <source>
        <dbReference type="HAMAP-Rule" id="MF_01208"/>
    </source>
</evidence>
<reference key="1">
    <citation type="journal article" date="2007" name="PLoS ONE">
        <title>Analysis of the neurotoxin complex genes in Clostridium botulinum A1-A4 and B1 strains: BoNT/A3, /Ba4 and /B1 clusters are located within plasmids.</title>
        <authorList>
            <person name="Smith T.J."/>
            <person name="Hill K.K."/>
            <person name="Foley B.T."/>
            <person name="Detter J.C."/>
            <person name="Munk A.C."/>
            <person name="Bruce D.C."/>
            <person name="Doggett N.A."/>
            <person name="Smith L.A."/>
            <person name="Marks J.D."/>
            <person name="Xie G."/>
            <person name="Brettin T.S."/>
        </authorList>
    </citation>
    <scope>NUCLEOTIDE SEQUENCE [LARGE SCALE GENOMIC DNA]</scope>
    <source>
        <strain>ATCC 19397 / Type A</strain>
    </source>
</reference>
<feature type="chain" id="PRO_1000138775" description="Orotate phosphoribosyltransferase">
    <location>
        <begin position="1"/>
        <end position="191"/>
    </location>
</feature>
<feature type="binding site" evidence="1">
    <location>
        <begin position="114"/>
        <end position="122"/>
    </location>
    <ligand>
        <name>5-phospho-alpha-D-ribose 1-diphosphate</name>
        <dbReference type="ChEBI" id="CHEBI:58017"/>
    </ligand>
</feature>
<feature type="binding site" evidence="1">
    <location>
        <position position="118"/>
    </location>
    <ligand>
        <name>orotate</name>
        <dbReference type="ChEBI" id="CHEBI:30839"/>
    </ligand>
</feature>
<feature type="binding site" evidence="1">
    <location>
        <position position="146"/>
    </location>
    <ligand>
        <name>orotate</name>
        <dbReference type="ChEBI" id="CHEBI:30839"/>
    </ligand>
</feature>
<keyword id="KW-0328">Glycosyltransferase</keyword>
<keyword id="KW-0460">Magnesium</keyword>
<keyword id="KW-0665">Pyrimidine biosynthesis</keyword>
<keyword id="KW-0808">Transferase</keyword>
<name>PYRE_CLOB1</name>
<accession>A7FYI6</accession>
<gene>
    <name evidence="1" type="primary">pyrE</name>
    <name type="ordered locus">CLB_3272</name>
</gene>